<name>PTPA2_EREGS</name>
<reference key="1">
    <citation type="journal article" date="2004" name="Science">
        <title>The Ashbya gossypii genome as a tool for mapping the ancient Saccharomyces cerevisiae genome.</title>
        <authorList>
            <person name="Dietrich F.S."/>
            <person name="Voegeli S."/>
            <person name="Brachat S."/>
            <person name="Lerch A."/>
            <person name="Gates K."/>
            <person name="Steiner S."/>
            <person name="Mohr C."/>
            <person name="Poehlmann R."/>
            <person name="Luedi P."/>
            <person name="Choi S."/>
            <person name="Wing R.A."/>
            <person name="Flavier A."/>
            <person name="Gaffney T.D."/>
            <person name="Philippsen P."/>
        </authorList>
    </citation>
    <scope>NUCLEOTIDE SEQUENCE [LARGE SCALE GENOMIC DNA]</scope>
    <source>
        <strain>ATCC 10895 / CBS 109.51 / FGSC 9923 / NRRL Y-1056</strain>
    </source>
</reference>
<reference key="2">
    <citation type="journal article" date="2013" name="G3 (Bethesda)">
        <title>Genomes of Ashbya fungi isolated from insects reveal four mating-type loci, numerous translocations, lack of transposons, and distinct gene duplications.</title>
        <authorList>
            <person name="Dietrich F.S."/>
            <person name="Voegeli S."/>
            <person name="Kuo S."/>
            <person name="Philippsen P."/>
        </authorList>
    </citation>
    <scope>GENOME REANNOTATION</scope>
    <source>
        <strain>ATCC 10895 / CBS 109.51 / FGSC 9923 / NRRL Y-1056</strain>
    </source>
</reference>
<comment type="function">
    <text evidence="1">PPIases accelerate the folding of proteins. It catalyzes the cis-trans isomerization of proline imidic peptide bonds in oligopeptides. Acts as a regulatory subunit for PP2A-like phosphatases modulating their activity or substrate specificity, probably by inducing a conformational change in the catalytic subunit, a direct target of the PPIase. Can reactivate inactive phosphatase PP2A-phosphatase methylesterase complexes (PP2Ai) in presence of ATP and Mg(2+) by dissociating the inactive form from the complex (By similarity).</text>
</comment>
<comment type="catalytic activity">
    <reaction>
        <text>[protein]-peptidylproline (omega=180) = [protein]-peptidylproline (omega=0)</text>
        <dbReference type="Rhea" id="RHEA:16237"/>
        <dbReference type="Rhea" id="RHEA-COMP:10747"/>
        <dbReference type="Rhea" id="RHEA-COMP:10748"/>
        <dbReference type="ChEBI" id="CHEBI:83833"/>
        <dbReference type="ChEBI" id="CHEBI:83834"/>
        <dbReference type="EC" id="5.2.1.8"/>
    </reaction>
</comment>
<comment type="subcellular location">
    <subcellularLocation>
        <location evidence="1">Cytoplasm</location>
    </subcellularLocation>
</comment>
<comment type="similarity">
    <text evidence="2">Belongs to the PTPA-type PPIase family.</text>
</comment>
<sequence length="359" mass="40520">MSDGAELKMAAQKRLLTGSDLDKWKASKTFEELLRFVSSLAQSVRGRENSEHAEPVSPAIEALEALLEEMQGIAAHHPVLQDAATSRFGKVEFRDFHKEVQARAEALVLQVDPSLTDEQAQELAVYLGNAWGDCKRIDYGSGHELNFVCFLYGLWKYGVLSEHDFTNAVLRVFVKYMDVMRVLETKYWLEPAGSHGVWGLDDYHFLPFLFGAFQLATHKHLKPKSIHNPEVVELFENRYLYFGCIAFINRVKTTASLRWHSPMLDDISGVRSWTKVSEGMVKMYKAEVLGKLPIMQHFFFSRFLPVPDGVSPPRTSEEELADCSEHAHSTWGDCCGIPIPSAVAASEATRKHSKPLPFD</sequence>
<organism>
    <name type="scientific">Eremothecium gossypii (strain ATCC 10895 / CBS 109.51 / FGSC 9923 / NRRL Y-1056)</name>
    <name type="common">Yeast</name>
    <name type="synonym">Ashbya gossypii</name>
    <dbReference type="NCBI Taxonomy" id="284811"/>
    <lineage>
        <taxon>Eukaryota</taxon>
        <taxon>Fungi</taxon>
        <taxon>Dikarya</taxon>
        <taxon>Ascomycota</taxon>
        <taxon>Saccharomycotina</taxon>
        <taxon>Saccharomycetes</taxon>
        <taxon>Saccharomycetales</taxon>
        <taxon>Saccharomycetaceae</taxon>
        <taxon>Eremothecium</taxon>
    </lineage>
</organism>
<keyword id="KW-0963">Cytoplasm</keyword>
<keyword id="KW-0413">Isomerase</keyword>
<keyword id="KW-1185">Reference proteome</keyword>
<keyword id="KW-0697">Rotamase</keyword>
<proteinExistence type="inferred from homology"/>
<gene>
    <name type="primary">RRD2</name>
    <name type="ordered locus">ACR139C</name>
</gene>
<evidence type="ECO:0000250" key="1"/>
<evidence type="ECO:0000305" key="2"/>
<accession>Q75BY1</accession>
<dbReference type="EC" id="5.2.1.8"/>
<dbReference type="EMBL" id="AE016816">
    <property type="protein sequence ID" value="AAS51365.1"/>
    <property type="molecule type" value="Genomic_DNA"/>
</dbReference>
<dbReference type="RefSeq" id="NP_983541.1">
    <property type="nucleotide sequence ID" value="NM_208894.1"/>
</dbReference>
<dbReference type="SMR" id="Q75BY1"/>
<dbReference type="FunCoup" id="Q75BY1">
    <property type="interactions" value="550"/>
</dbReference>
<dbReference type="STRING" id="284811.Q75BY1"/>
<dbReference type="EnsemblFungi" id="AAS51365">
    <property type="protein sequence ID" value="AAS51365"/>
    <property type="gene ID" value="AGOS_ACR139C"/>
</dbReference>
<dbReference type="GeneID" id="4619673"/>
<dbReference type="KEGG" id="ago:AGOS_ACR139C"/>
<dbReference type="eggNOG" id="KOG2867">
    <property type="taxonomic scope" value="Eukaryota"/>
</dbReference>
<dbReference type="HOGENOM" id="CLU_030733_0_0_1"/>
<dbReference type="InParanoid" id="Q75BY1"/>
<dbReference type="OMA" id="YLWGAAQ"/>
<dbReference type="OrthoDB" id="16120at2759"/>
<dbReference type="Proteomes" id="UP000000591">
    <property type="component" value="Chromosome III"/>
</dbReference>
<dbReference type="GO" id="GO:0005737">
    <property type="term" value="C:cytoplasm"/>
    <property type="evidence" value="ECO:0000318"/>
    <property type="project" value="GO_Central"/>
</dbReference>
<dbReference type="GO" id="GO:0005634">
    <property type="term" value="C:nucleus"/>
    <property type="evidence" value="ECO:0000318"/>
    <property type="project" value="GO_Central"/>
</dbReference>
<dbReference type="GO" id="GO:0000159">
    <property type="term" value="C:protein phosphatase type 2A complex"/>
    <property type="evidence" value="ECO:0000318"/>
    <property type="project" value="GO_Central"/>
</dbReference>
<dbReference type="GO" id="GO:0003755">
    <property type="term" value="F:peptidyl-prolyl cis-trans isomerase activity"/>
    <property type="evidence" value="ECO:0000318"/>
    <property type="project" value="GO_Central"/>
</dbReference>
<dbReference type="GO" id="GO:0008160">
    <property type="term" value="F:protein tyrosine phosphatase activator activity"/>
    <property type="evidence" value="ECO:0000318"/>
    <property type="project" value="GO_Central"/>
</dbReference>
<dbReference type="GO" id="GO:0007052">
    <property type="term" value="P:mitotic spindle organization"/>
    <property type="evidence" value="ECO:0000318"/>
    <property type="project" value="GO_Central"/>
</dbReference>
<dbReference type="GO" id="GO:0006970">
    <property type="term" value="P:response to osmotic stress"/>
    <property type="evidence" value="ECO:0007669"/>
    <property type="project" value="EnsemblFungi"/>
</dbReference>
<dbReference type="CDD" id="cd04087">
    <property type="entry name" value="PTPA"/>
    <property type="match status" value="1"/>
</dbReference>
<dbReference type="FunFam" id="1.20.120.1150:FF:000002">
    <property type="entry name" value="Serine/threonine-protein phosphatase 2A activator"/>
    <property type="match status" value="1"/>
</dbReference>
<dbReference type="Gene3D" id="1.20.120.1150">
    <property type="match status" value="1"/>
</dbReference>
<dbReference type="InterPro" id="IPR004327">
    <property type="entry name" value="Phstyr_phstse_ac"/>
</dbReference>
<dbReference type="InterPro" id="IPR043170">
    <property type="entry name" value="PTPA_C_lid"/>
</dbReference>
<dbReference type="InterPro" id="IPR037218">
    <property type="entry name" value="PTPA_sf"/>
</dbReference>
<dbReference type="PANTHER" id="PTHR10012">
    <property type="entry name" value="SERINE/THREONINE-PROTEIN PHOSPHATASE 2A REGULATORY SUBUNIT B"/>
    <property type="match status" value="1"/>
</dbReference>
<dbReference type="PANTHER" id="PTHR10012:SF5">
    <property type="entry name" value="SERINE_THREONINE-PROTEIN PHOSPHATASE 2A ACTIVATOR 2"/>
    <property type="match status" value="1"/>
</dbReference>
<dbReference type="Pfam" id="PF03095">
    <property type="entry name" value="PTPA"/>
    <property type="match status" value="1"/>
</dbReference>
<dbReference type="PIRSF" id="PIRSF016325">
    <property type="entry name" value="Phstyr_phstse_ac"/>
    <property type="match status" value="1"/>
</dbReference>
<dbReference type="SUPFAM" id="SSF140984">
    <property type="entry name" value="PTPA-like"/>
    <property type="match status" value="1"/>
</dbReference>
<protein>
    <recommendedName>
        <fullName>Serine/threonine-protein phosphatase 2A activator 2</fullName>
        <ecNumber>5.2.1.8</ecNumber>
    </recommendedName>
    <alternativeName>
        <fullName>Peptidyl-prolyl cis-trans isomerase PTPA-2</fullName>
        <shortName>PPIase PTPA-2</shortName>
        <shortName>Rotamase PTPA-2</shortName>
    </alternativeName>
    <alternativeName>
        <fullName>Phosphotyrosyl phosphatase activator 2</fullName>
    </alternativeName>
</protein>
<feature type="chain" id="PRO_0000226106" description="Serine/threonine-protein phosphatase 2A activator 2">
    <location>
        <begin position="1"/>
        <end position="359"/>
    </location>
</feature>